<gene>
    <name type="primary">CADM4</name>
    <name type="synonym">IGSF4C</name>
    <name type="synonym">NECL4</name>
    <name type="synonym">TSLL2</name>
</gene>
<proteinExistence type="evidence at protein level"/>
<keyword id="KW-0130">Cell adhesion</keyword>
<keyword id="KW-1015">Disulfide bond</keyword>
<keyword id="KW-0325">Glycoprotein</keyword>
<keyword id="KW-0393">Immunoglobulin domain</keyword>
<keyword id="KW-0472">Membrane</keyword>
<keyword id="KW-0597">Phosphoprotein</keyword>
<keyword id="KW-1267">Proteomics identification</keyword>
<keyword id="KW-1185">Reference proteome</keyword>
<keyword id="KW-0677">Repeat</keyword>
<keyword id="KW-0732">Signal</keyword>
<keyword id="KW-0812">Transmembrane</keyword>
<keyword id="KW-1133">Transmembrane helix</keyword>
<keyword id="KW-0043">Tumor suppressor</keyword>
<reference key="1">
    <citation type="journal article" date="2001" name="Oncogene">
        <title>Isolation of the TSLL1 and TSLL2 genes, members of the tumor suppressor TSLC1 gene family encoding transmembrane proteins.</title>
        <authorList>
            <person name="Fukuhara H."/>
            <person name="Kuramochi M."/>
            <person name="Nobukuni T."/>
            <person name="Fukami T."/>
            <person name="Saino M."/>
            <person name="Maruyama T."/>
            <person name="Nomura S."/>
            <person name="Sekiya T."/>
            <person name="Murakami Y."/>
        </authorList>
    </citation>
    <scope>NUCLEOTIDE SEQUENCE [MRNA]</scope>
    <scope>TISSUE SPECIFICITY</scope>
</reference>
<reference key="2">
    <citation type="journal article" date="2004" name="Nat. Genet.">
        <title>Complete sequencing and characterization of 21,243 full-length human cDNAs.</title>
        <authorList>
            <person name="Ota T."/>
            <person name="Suzuki Y."/>
            <person name="Nishikawa T."/>
            <person name="Otsuki T."/>
            <person name="Sugiyama T."/>
            <person name="Irie R."/>
            <person name="Wakamatsu A."/>
            <person name="Hayashi K."/>
            <person name="Sato H."/>
            <person name="Nagai K."/>
            <person name="Kimura K."/>
            <person name="Makita H."/>
            <person name="Sekine M."/>
            <person name="Obayashi M."/>
            <person name="Nishi T."/>
            <person name="Shibahara T."/>
            <person name="Tanaka T."/>
            <person name="Ishii S."/>
            <person name="Yamamoto J."/>
            <person name="Saito K."/>
            <person name="Kawai Y."/>
            <person name="Isono Y."/>
            <person name="Nakamura Y."/>
            <person name="Nagahari K."/>
            <person name="Murakami K."/>
            <person name="Yasuda T."/>
            <person name="Iwayanagi T."/>
            <person name="Wagatsuma M."/>
            <person name="Shiratori A."/>
            <person name="Sudo H."/>
            <person name="Hosoiri T."/>
            <person name="Kaku Y."/>
            <person name="Kodaira H."/>
            <person name="Kondo H."/>
            <person name="Sugawara M."/>
            <person name="Takahashi M."/>
            <person name="Kanda K."/>
            <person name="Yokoi T."/>
            <person name="Furuya T."/>
            <person name="Kikkawa E."/>
            <person name="Omura Y."/>
            <person name="Abe K."/>
            <person name="Kamihara K."/>
            <person name="Katsuta N."/>
            <person name="Sato K."/>
            <person name="Tanikawa M."/>
            <person name="Yamazaki M."/>
            <person name="Ninomiya K."/>
            <person name="Ishibashi T."/>
            <person name="Yamashita H."/>
            <person name="Murakawa K."/>
            <person name="Fujimori K."/>
            <person name="Tanai H."/>
            <person name="Kimata M."/>
            <person name="Watanabe M."/>
            <person name="Hiraoka S."/>
            <person name="Chiba Y."/>
            <person name="Ishida S."/>
            <person name="Ono Y."/>
            <person name="Takiguchi S."/>
            <person name="Watanabe S."/>
            <person name="Yosida M."/>
            <person name="Hotuta T."/>
            <person name="Kusano J."/>
            <person name="Kanehori K."/>
            <person name="Takahashi-Fujii A."/>
            <person name="Hara H."/>
            <person name="Tanase T.-O."/>
            <person name="Nomura Y."/>
            <person name="Togiya S."/>
            <person name="Komai F."/>
            <person name="Hara R."/>
            <person name="Takeuchi K."/>
            <person name="Arita M."/>
            <person name="Imose N."/>
            <person name="Musashino K."/>
            <person name="Yuuki H."/>
            <person name="Oshima A."/>
            <person name="Sasaki N."/>
            <person name="Aotsuka S."/>
            <person name="Yoshikawa Y."/>
            <person name="Matsunawa H."/>
            <person name="Ichihara T."/>
            <person name="Shiohata N."/>
            <person name="Sano S."/>
            <person name="Moriya S."/>
            <person name="Momiyama H."/>
            <person name="Satoh N."/>
            <person name="Takami S."/>
            <person name="Terashima Y."/>
            <person name="Suzuki O."/>
            <person name="Nakagawa S."/>
            <person name="Senoh A."/>
            <person name="Mizoguchi H."/>
            <person name="Goto Y."/>
            <person name="Shimizu F."/>
            <person name="Wakebe H."/>
            <person name="Hishigaki H."/>
            <person name="Watanabe T."/>
            <person name="Sugiyama A."/>
            <person name="Takemoto M."/>
            <person name="Kawakami B."/>
            <person name="Yamazaki M."/>
            <person name="Watanabe K."/>
            <person name="Kumagai A."/>
            <person name="Itakura S."/>
            <person name="Fukuzumi Y."/>
            <person name="Fujimori Y."/>
            <person name="Komiyama M."/>
            <person name="Tashiro H."/>
            <person name="Tanigami A."/>
            <person name="Fujiwara T."/>
            <person name="Ono T."/>
            <person name="Yamada K."/>
            <person name="Fujii Y."/>
            <person name="Ozaki K."/>
            <person name="Hirao M."/>
            <person name="Ohmori Y."/>
            <person name="Kawabata A."/>
            <person name="Hikiji T."/>
            <person name="Kobatake N."/>
            <person name="Inagaki H."/>
            <person name="Ikema Y."/>
            <person name="Okamoto S."/>
            <person name="Okitani R."/>
            <person name="Kawakami T."/>
            <person name="Noguchi S."/>
            <person name="Itoh T."/>
            <person name="Shigeta K."/>
            <person name="Senba T."/>
            <person name="Matsumura K."/>
            <person name="Nakajima Y."/>
            <person name="Mizuno T."/>
            <person name="Morinaga M."/>
            <person name="Sasaki M."/>
            <person name="Togashi T."/>
            <person name="Oyama M."/>
            <person name="Hata H."/>
            <person name="Watanabe M."/>
            <person name="Komatsu T."/>
            <person name="Mizushima-Sugano J."/>
            <person name="Satoh T."/>
            <person name="Shirai Y."/>
            <person name="Takahashi Y."/>
            <person name="Nakagawa K."/>
            <person name="Okumura K."/>
            <person name="Nagase T."/>
            <person name="Nomura N."/>
            <person name="Kikuchi H."/>
            <person name="Masuho Y."/>
            <person name="Yamashita R."/>
            <person name="Nakai K."/>
            <person name="Yada T."/>
            <person name="Nakamura Y."/>
            <person name="Ohara O."/>
            <person name="Isogai T."/>
            <person name="Sugano S."/>
        </authorList>
    </citation>
    <scope>NUCLEOTIDE SEQUENCE [LARGE SCALE MRNA]</scope>
    <source>
        <tissue>Amygdala</tissue>
    </source>
</reference>
<reference key="3">
    <citation type="journal article" date="2004" name="Nature">
        <title>The DNA sequence and biology of human chromosome 19.</title>
        <authorList>
            <person name="Grimwood J."/>
            <person name="Gordon L.A."/>
            <person name="Olsen A.S."/>
            <person name="Terry A."/>
            <person name="Schmutz J."/>
            <person name="Lamerdin J.E."/>
            <person name="Hellsten U."/>
            <person name="Goodstein D."/>
            <person name="Couronne O."/>
            <person name="Tran-Gyamfi M."/>
            <person name="Aerts A."/>
            <person name="Altherr M."/>
            <person name="Ashworth L."/>
            <person name="Bajorek E."/>
            <person name="Black S."/>
            <person name="Branscomb E."/>
            <person name="Caenepeel S."/>
            <person name="Carrano A.V."/>
            <person name="Caoile C."/>
            <person name="Chan Y.M."/>
            <person name="Christensen M."/>
            <person name="Cleland C.A."/>
            <person name="Copeland A."/>
            <person name="Dalin E."/>
            <person name="Dehal P."/>
            <person name="Denys M."/>
            <person name="Detter J.C."/>
            <person name="Escobar J."/>
            <person name="Flowers D."/>
            <person name="Fotopulos D."/>
            <person name="Garcia C."/>
            <person name="Georgescu A.M."/>
            <person name="Glavina T."/>
            <person name="Gomez M."/>
            <person name="Gonzales E."/>
            <person name="Groza M."/>
            <person name="Hammon N."/>
            <person name="Hawkins T."/>
            <person name="Haydu L."/>
            <person name="Ho I."/>
            <person name="Huang W."/>
            <person name="Israni S."/>
            <person name="Jett J."/>
            <person name="Kadner K."/>
            <person name="Kimball H."/>
            <person name="Kobayashi A."/>
            <person name="Larionov V."/>
            <person name="Leem S.-H."/>
            <person name="Lopez F."/>
            <person name="Lou Y."/>
            <person name="Lowry S."/>
            <person name="Malfatti S."/>
            <person name="Martinez D."/>
            <person name="McCready P.M."/>
            <person name="Medina C."/>
            <person name="Morgan J."/>
            <person name="Nelson K."/>
            <person name="Nolan M."/>
            <person name="Ovcharenko I."/>
            <person name="Pitluck S."/>
            <person name="Pollard M."/>
            <person name="Popkie A.P."/>
            <person name="Predki P."/>
            <person name="Quan G."/>
            <person name="Ramirez L."/>
            <person name="Rash S."/>
            <person name="Retterer J."/>
            <person name="Rodriguez A."/>
            <person name="Rogers S."/>
            <person name="Salamov A."/>
            <person name="Salazar A."/>
            <person name="She X."/>
            <person name="Smith D."/>
            <person name="Slezak T."/>
            <person name="Solovyev V."/>
            <person name="Thayer N."/>
            <person name="Tice H."/>
            <person name="Tsai M."/>
            <person name="Ustaszewska A."/>
            <person name="Vo N."/>
            <person name="Wagner M."/>
            <person name="Wheeler J."/>
            <person name="Wu K."/>
            <person name="Xie G."/>
            <person name="Yang J."/>
            <person name="Dubchak I."/>
            <person name="Furey T.S."/>
            <person name="DeJong P."/>
            <person name="Dickson M."/>
            <person name="Gordon D."/>
            <person name="Eichler E.E."/>
            <person name="Pennacchio L.A."/>
            <person name="Richardson P."/>
            <person name="Stubbs L."/>
            <person name="Rokhsar D.S."/>
            <person name="Myers R.M."/>
            <person name="Rubin E.M."/>
            <person name="Lucas S.M."/>
        </authorList>
    </citation>
    <scope>NUCLEOTIDE SEQUENCE [LARGE SCALE GENOMIC DNA]</scope>
</reference>
<reference key="4">
    <citation type="journal article" date="2006" name="Oncogene">
        <title>Cell adhesion and prostate tumor-suppressor activity of TSLL2/IGSF4C, an immunoglobulin superfamily molecule homologous to TSLC1/IGSF4.</title>
        <authorList>
            <person name="Williams Y.N."/>
            <person name="Masuda M."/>
            <person name="Sakurai-Yageta M."/>
            <person name="Maruyama T."/>
            <person name="Shibuya M."/>
            <person name="Murakami Y."/>
        </authorList>
    </citation>
    <scope>FUNCTION</scope>
    <scope>SUBUNIT</scope>
    <scope>TISSUE SPECIFICITY</scope>
</reference>
<comment type="function">
    <text evidence="6">Involved in the cell-cell adhesion. Has calcium- and magnesium-independent cell-cell adhesion activity. May have tumor-suppressor activity.</text>
</comment>
<comment type="subunit">
    <text evidence="6">Monomer and homodimer.</text>
</comment>
<comment type="interaction">
    <interactant intactId="EBI-7129521">
        <id>Q8NFZ8</id>
    </interactant>
    <interactant intactId="EBI-54722157">
        <id>Q9UKR8</id>
        <label>TSPAN16</label>
    </interactant>
    <organismsDiffer>false</organismsDiffer>
    <experiments>2</experiments>
</comment>
<comment type="subcellular location">
    <subcellularLocation>
        <location evidence="7">Membrane</location>
        <topology evidence="7">Single-pass type I membrane protein</topology>
    </subcellularLocation>
</comment>
<comment type="tissue specificity">
    <text evidence="5 6">Expressed in brain, prostate, brain, kidney and some other organs.</text>
</comment>
<comment type="PTM">
    <text evidence="1">N-glycosylated.</text>
</comment>
<comment type="similarity">
    <text evidence="7">Belongs to the nectin family.</text>
</comment>
<comment type="sequence caution" evidence="7">
    <conflict type="erroneous gene model prediction">
        <sequence resource="EMBL-CDS" id="AAC32740"/>
    </conflict>
</comment>
<evidence type="ECO:0000250" key="1"/>
<evidence type="ECO:0000250" key="2">
    <source>
        <dbReference type="UniProtKB" id="Q8R464"/>
    </source>
</evidence>
<evidence type="ECO:0000255" key="3"/>
<evidence type="ECO:0000255" key="4">
    <source>
        <dbReference type="PROSITE-ProRule" id="PRU00114"/>
    </source>
</evidence>
<evidence type="ECO:0000269" key="5">
    <source>
    </source>
</evidence>
<evidence type="ECO:0000269" key="6">
    <source>
    </source>
</evidence>
<evidence type="ECO:0000305" key="7"/>
<sequence length="388" mass="42785">MGRARRFQWPLLLLWAAAAGPGAGQEVQTENVTVAEGGVAEITCRLHQYDGSIVVIQNPARQTLFFNGTRALKDERFQLEEFSPRRVRIRLSDARLEDEGGYFCQLYTEDTHHQIATLTVLVAPENPVVEVREQAVEGGEVELSCLVPRSRPAATLRWYRDRKELKGVSSSQENGKVWSVASTVRFRVDRKDDGGIIICEAQNQALPSGHSKQTQYVLDVQYSPTARIHASQAVVREGDTLVLTCAVTGNPRPNQIRWNRGNESLPERAEAVGETLTLPGLVSADNGTYTCEASNKHGHARALYVLVVYDPGAVVEAQTSVPYAIVGGILALLVFLIICVLVGMVWCSVRQKGSYLTHEASGLDEQGEAREAFLNGSDGHKRKEEFFI</sequence>
<name>CADM4_HUMAN</name>
<organism>
    <name type="scientific">Homo sapiens</name>
    <name type="common">Human</name>
    <dbReference type="NCBI Taxonomy" id="9606"/>
    <lineage>
        <taxon>Eukaryota</taxon>
        <taxon>Metazoa</taxon>
        <taxon>Chordata</taxon>
        <taxon>Craniata</taxon>
        <taxon>Vertebrata</taxon>
        <taxon>Euteleostomi</taxon>
        <taxon>Mammalia</taxon>
        <taxon>Eutheria</taxon>
        <taxon>Euarchontoglires</taxon>
        <taxon>Primates</taxon>
        <taxon>Haplorrhini</taxon>
        <taxon>Catarrhini</taxon>
        <taxon>Hominidae</taxon>
        <taxon>Homo</taxon>
    </lineage>
</organism>
<dbReference type="EMBL" id="AF363368">
    <property type="protein sequence ID" value="AAM60750.1"/>
    <property type="molecule type" value="mRNA"/>
</dbReference>
<dbReference type="EMBL" id="AK313028">
    <property type="protein sequence ID" value="BAG35862.1"/>
    <property type="molecule type" value="mRNA"/>
</dbReference>
<dbReference type="EMBL" id="AC005525">
    <property type="protein sequence ID" value="AAC32740.1"/>
    <property type="status" value="ALT_SEQ"/>
    <property type="molecule type" value="Genomic_DNA"/>
</dbReference>
<dbReference type="CCDS" id="CCDS12627.1"/>
<dbReference type="RefSeq" id="NP_660339.1">
    <property type="nucleotide sequence ID" value="NM_145296.2"/>
</dbReference>
<dbReference type="SMR" id="Q8NFZ8"/>
<dbReference type="BioGRID" id="128268">
    <property type="interactions" value="65"/>
</dbReference>
<dbReference type="FunCoup" id="Q8NFZ8">
    <property type="interactions" value="144"/>
</dbReference>
<dbReference type="IntAct" id="Q8NFZ8">
    <property type="interactions" value="39"/>
</dbReference>
<dbReference type="MINT" id="Q8NFZ8"/>
<dbReference type="STRING" id="9606.ENSP00000222374"/>
<dbReference type="GlyConnect" id="1102">
    <property type="glycosylation" value="2 N-Linked glycans (2 sites)"/>
</dbReference>
<dbReference type="GlyCosmos" id="Q8NFZ8">
    <property type="glycosylation" value="3 sites, 2 glycans"/>
</dbReference>
<dbReference type="GlyGen" id="Q8NFZ8">
    <property type="glycosylation" value="7 sites, 33 N-linked glycans (4 sites), 1 O-linked glycan (1 site)"/>
</dbReference>
<dbReference type="iPTMnet" id="Q8NFZ8"/>
<dbReference type="PhosphoSitePlus" id="Q8NFZ8"/>
<dbReference type="SwissPalm" id="Q8NFZ8"/>
<dbReference type="BioMuta" id="CADM4"/>
<dbReference type="DMDM" id="74762572"/>
<dbReference type="jPOST" id="Q8NFZ8"/>
<dbReference type="MassIVE" id="Q8NFZ8"/>
<dbReference type="PaxDb" id="9606-ENSP00000222374"/>
<dbReference type="PeptideAtlas" id="Q8NFZ8"/>
<dbReference type="ProteomicsDB" id="73401"/>
<dbReference type="Pumba" id="Q8NFZ8"/>
<dbReference type="ABCD" id="Q8NFZ8">
    <property type="antibodies" value="1 sequenced antibody"/>
</dbReference>
<dbReference type="Antibodypedia" id="2174">
    <property type="antibodies" value="289 antibodies from 41 providers"/>
</dbReference>
<dbReference type="DNASU" id="199731"/>
<dbReference type="Ensembl" id="ENST00000222374.3">
    <property type="protein sequence ID" value="ENSP00000222374.1"/>
    <property type="gene ID" value="ENSG00000105767.3"/>
</dbReference>
<dbReference type="GeneID" id="199731"/>
<dbReference type="KEGG" id="hsa:199731"/>
<dbReference type="MANE-Select" id="ENST00000222374.3">
    <property type="protein sequence ID" value="ENSP00000222374.1"/>
    <property type="RefSeq nucleotide sequence ID" value="NM_145296.2"/>
    <property type="RefSeq protein sequence ID" value="NP_660339.1"/>
</dbReference>
<dbReference type="UCSC" id="uc002oxc.2">
    <property type="organism name" value="human"/>
</dbReference>
<dbReference type="AGR" id="HGNC:30825"/>
<dbReference type="CTD" id="199731"/>
<dbReference type="DisGeNET" id="199731"/>
<dbReference type="GeneCards" id="CADM4"/>
<dbReference type="HGNC" id="HGNC:30825">
    <property type="gene designation" value="CADM4"/>
</dbReference>
<dbReference type="HPA" id="ENSG00000105767">
    <property type="expression patterns" value="Tissue enhanced (brain)"/>
</dbReference>
<dbReference type="MIM" id="609744">
    <property type="type" value="gene"/>
</dbReference>
<dbReference type="neXtProt" id="NX_Q8NFZ8"/>
<dbReference type="OpenTargets" id="ENSG00000105767"/>
<dbReference type="PharmGKB" id="PA162380931"/>
<dbReference type="VEuPathDB" id="HostDB:ENSG00000105767"/>
<dbReference type="eggNOG" id="ENOG502RFJZ">
    <property type="taxonomic scope" value="Eukaryota"/>
</dbReference>
<dbReference type="GeneTree" id="ENSGT00940000161223"/>
<dbReference type="HOGENOM" id="CLU_047574_2_0_1"/>
<dbReference type="InParanoid" id="Q8NFZ8"/>
<dbReference type="OMA" id="IQNPVRQ"/>
<dbReference type="OrthoDB" id="10028801at2759"/>
<dbReference type="PAN-GO" id="Q8NFZ8">
    <property type="GO annotations" value="6 GO annotations based on evolutionary models"/>
</dbReference>
<dbReference type="PhylomeDB" id="Q8NFZ8"/>
<dbReference type="TreeFam" id="TF338300"/>
<dbReference type="PathwayCommons" id="Q8NFZ8"/>
<dbReference type="SignaLink" id="Q8NFZ8"/>
<dbReference type="BioGRID-ORCS" id="199731">
    <property type="hits" value="190 hits in 1159 CRISPR screens"/>
</dbReference>
<dbReference type="ChiTaRS" id="CADM4">
    <property type="organism name" value="human"/>
</dbReference>
<dbReference type="GenomeRNAi" id="199731"/>
<dbReference type="Pharos" id="Q8NFZ8">
    <property type="development level" value="Tbio"/>
</dbReference>
<dbReference type="PRO" id="PR:Q8NFZ8"/>
<dbReference type="Proteomes" id="UP000005640">
    <property type="component" value="Chromosome 19"/>
</dbReference>
<dbReference type="RNAct" id="Q8NFZ8">
    <property type="molecule type" value="protein"/>
</dbReference>
<dbReference type="Bgee" id="ENSG00000105767">
    <property type="expression patterns" value="Expressed in cortical plate and 145 other cell types or tissues"/>
</dbReference>
<dbReference type="GO" id="GO:0031252">
    <property type="term" value="C:cell leading edge"/>
    <property type="evidence" value="ECO:0000314"/>
    <property type="project" value="UniProtKB"/>
</dbReference>
<dbReference type="GO" id="GO:0044291">
    <property type="term" value="C:cell-cell contact zone"/>
    <property type="evidence" value="ECO:0000314"/>
    <property type="project" value="UniProtKB"/>
</dbReference>
<dbReference type="GO" id="GO:0016020">
    <property type="term" value="C:membrane"/>
    <property type="evidence" value="ECO:0007669"/>
    <property type="project" value="UniProtKB-SubCell"/>
</dbReference>
<dbReference type="GO" id="GO:0019903">
    <property type="term" value="F:protein phosphatase binding"/>
    <property type="evidence" value="ECO:0007669"/>
    <property type="project" value="Ensembl"/>
</dbReference>
<dbReference type="GO" id="GO:0030971">
    <property type="term" value="F:receptor tyrosine kinase binding"/>
    <property type="evidence" value="ECO:0007669"/>
    <property type="project" value="Ensembl"/>
</dbReference>
<dbReference type="GO" id="GO:0043183">
    <property type="term" value="F:vascular endothelial growth factor receptor 1 binding"/>
    <property type="evidence" value="ECO:0007669"/>
    <property type="project" value="Ensembl"/>
</dbReference>
<dbReference type="GO" id="GO:0043184">
    <property type="term" value="F:vascular endothelial growth factor receptor 2 binding"/>
    <property type="evidence" value="ECO:0000353"/>
    <property type="project" value="UniProtKB"/>
</dbReference>
<dbReference type="GO" id="GO:0007156">
    <property type="term" value="P:homophilic cell adhesion via plasma membrane adhesion molecules"/>
    <property type="evidence" value="ECO:0000318"/>
    <property type="project" value="GO_Central"/>
</dbReference>
<dbReference type="GO" id="GO:0010801">
    <property type="term" value="P:negative regulation of peptidyl-threonine phosphorylation"/>
    <property type="evidence" value="ECO:0000315"/>
    <property type="project" value="UniProtKB"/>
</dbReference>
<dbReference type="GO" id="GO:0050732">
    <property type="term" value="P:negative regulation of peptidyl-tyrosine phosphorylation"/>
    <property type="evidence" value="ECO:0000315"/>
    <property type="project" value="UniProtKB"/>
</dbReference>
<dbReference type="GO" id="GO:0001933">
    <property type="term" value="P:negative regulation of protein phosphorylation"/>
    <property type="evidence" value="ECO:0000315"/>
    <property type="project" value="UniProtKB"/>
</dbReference>
<dbReference type="GO" id="GO:0030948">
    <property type="term" value="P:negative regulation of vascular endothelial growth factor receptor signaling pathway"/>
    <property type="evidence" value="ECO:0000250"/>
    <property type="project" value="UniProtKB"/>
</dbReference>
<dbReference type="GO" id="GO:1900747">
    <property type="term" value="P:negative regulation of vascular endothelial growth factor signaling pathway"/>
    <property type="evidence" value="ECO:0000250"/>
    <property type="project" value="UniProtKB"/>
</dbReference>
<dbReference type="GO" id="GO:2000145">
    <property type="term" value="P:regulation of cell motility"/>
    <property type="evidence" value="ECO:0000315"/>
    <property type="project" value="UniProtKB"/>
</dbReference>
<dbReference type="GO" id="GO:0042127">
    <property type="term" value="P:regulation of cell population proliferation"/>
    <property type="evidence" value="ECO:0000315"/>
    <property type="project" value="UniProtKB"/>
</dbReference>
<dbReference type="GO" id="GO:0001932">
    <property type="term" value="P:regulation of protein phosphorylation"/>
    <property type="evidence" value="ECO:0000315"/>
    <property type="project" value="UniProtKB"/>
</dbReference>
<dbReference type="GO" id="GO:0035020">
    <property type="term" value="P:regulation of Rac protein signal transduction"/>
    <property type="evidence" value="ECO:0000315"/>
    <property type="project" value="UniProtKB"/>
</dbReference>
<dbReference type="GO" id="GO:0061041">
    <property type="term" value="P:regulation of wound healing"/>
    <property type="evidence" value="ECO:0000315"/>
    <property type="project" value="UniProtKB"/>
</dbReference>
<dbReference type="CDD" id="cd05885">
    <property type="entry name" value="IgI_2_Necl-4"/>
    <property type="match status" value="1"/>
</dbReference>
<dbReference type="FunFam" id="2.60.40.10:FF:000013">
    <property type="entry name" value="cell adhesion molecule 1 isoform X1"/>
    <property type="match status" value="1"/>
</dbReference>
<dbReference type="FunFam" id="2.60.40.10:FF:000588">
    <property type="entry name" value="Cell adhesion molecule 4"/>
    <property type="match status" value="1"/>
</dbReference>
<dbReference type="FunFam" id="2.60.40.10:FF:000589">
    <property type="entry name" value="cell adhesion molecule 4"/>
    <property type="match status" value="1"/>
</dbReference>
<dbReference type="Gene3D" id="2.60.40.10">
    <property type="entry name" value="Immunoglobulins"/>
    <property type="match status" value="3"/>
</dbReference>
<dbReference type="InterPro" id="IPR013162">
    <property type="entry name" value="CD80_C2-set"/>
</dbReference>
<dbReference type="InterPro" id="IPR007110">
    <property type="entry name" value="Ig-like_dom"/>
</dbReference>
<dbReference type="InterPro" id="IPR036179">
    <property type="entry name" value="Ig-like_dom_sf"/>
</dbReference>
<dbReference type="InterPro" id="IPR013783">
    <property type="entry name" value="Ig-like_fold"/>
</dbReference>
<dbReference type="InterPro" id="IPR003599">
    <property type="entry name" value="Ig_sub"/>
</dbReference>
<dbReference type="InterPro" id="IPR003598">
    <property type="entry name" value="Ig_sub2"/>
</dbReference>
<dbReference type="InterPro" id="IPR013106">
    <property type="entry name" value="Ig_V-set"/>
</dbReference>
<dbReference type="InterPro" id="IPR003585">
    <property type="entry name" value="Neurexin-like"/>
</dbReference>
<dbReference type="PANTHER" id="PTHR45889:SF3">
    <property type="entry name" value="CELL ADHESION MOLECULE 4"/>
    <property type="match status" value="1"/>
</dbReference>
<dbReference type="PANTHER" id="PTHR45889">
    <property type="entry name" value="IG-LIKE DOMAIN-CONTAINING PROTEIN"/>
    <property type="match status" value="1"/>
</dbReference>
<dbReference type="Pfam" id="PF08205">
    <property type="entry name" value="C2-set_2"/>
    <property type="match status" value="1"/>
</dbReference>
<dbReference type="Pfam" id="PF13927">
    <property type="entry name" value="Ig_3"/>
    <property type="match status" value="1"/>
</dbReference>
<dbReference type="Pfam" id="PF07686">
    <property type="entry name" value="V-set"/>
    <property type="match status" value="1"/>
</dbReference>
<dbReference type="SMART" id="SM00294">
    <property type="entry name" value="4.1m"/>
    <property type="match status" value="1"/>
</dbReference>
<dbReference type="SMART" id="SM00409">
    <property type="entry name" value="IG"/>
    <property type="match status" value="3"/>
</dbReference>
<dbReference type="SMART" id="SM00408">
    <property type="entry name" value="IGc2"/>
    <property type="match status" value="2"/>
</dbReference>
<dbReference type="SUPFAM" id="SSF48726">
    <property type="entry name" value="Immunoglobulin"/>
    <property type="match status" value="3"/>
</dbReference>
<dbReference type="PROSITE" id="PS50835">
    <property type="entry name" value="IG_LIKE"/>
    <property type="match status" value="2"/>
</dbReference>
<feature type="signal peptide" evidence="3">
    <location>
        <begin position="1"/>
        <end position="20"/>
    </location>
</feature>
<feature type="chain" id="PRO_0000291980" description="Cell adhesion molecule 4">
    <location>
        <begin position="21"/>
        <end position="388"/>
    </location>
</feature>
<feature type="topological domain" description="Extracellular" evidence="3">
    <location>
        <begin position="21"/>
        <end position="324"/>
    </location>
</feature>
<feature type="transmembrane region" description="Helical" evidence="3">
    <location>
        <begin position="325"/>
        <end position="345"/>
    </location>
</feature>
<feature type="topological domain" description="Cytoplasmic" evidence="3">
    <location>
        <begin position="346"/>
        <end position="388"/>
    </location>
</feature>
<feature type="domain" description="Ig-like V-type">
    <location>
        <begin position="21"/>
        <end position="119"/>
    </location>
</feature>
<feature type="domain" description="Ig-like C2-type 1">
    <location>
        <begin position="124"/>
        <end position="219"/>
    </location>
</feature>
<feature type="domain" description="Ig-like C2-type 2">
    <location>
        <begin position="224"/>
        <end position="307"/>
    </location>
</feature>
<feature type="modified residue" description="Phosphoserine" evidence="2">
    <location>
        <position position="361"/>
    </location>
</feature>
<feature type="glycosylation site" description="N-linked (GlcNAc...) asparagine" evidence="3">
    <location>
        <position position="31"/>
    </location>
</feature>
<feature type="glycosylation site" description="N-linked (GlcNAc...) asparagine" evidence="3">
    <location>
        <position position="67"/>
    </location>
</feature>
<feature type="glycosylation site" description="N-linked (GlcNAc...) asparagine" evidence="3">
    <location>
        <position position="286"/>
    </location>
</feature>
<feature type="disulfide bond" evidence="4">
    <location>
        <begin position="44"/>
        <end position="104"/>
    </location>
</feature>
<feature type="disulfide bond" evidence="4">
    <location>
        <begin position="145"/>
        <end position="199"/>
    </location>
</feature>
<feature type="disulfide bond" evidence="4">
    <location>
        <begin position="245"/>
        <end position="291"/>
    </location>
</feature>
<feature type="sequence variant" id="VAR_032906" description="In dbSNP:rs34246023.">
    <original>T</original>
    <variation>A</variation>
    <location>
        <position position="225"/>
    </location>
</feature>
<accession>Q8NFZ8</accession>
<accession>B2R7L5</accession>
<accession>Q9Y4A4</accession>
<protein>
    <recommendedName>
        <fullName>Cell adhesion molecule 4</fullName>
    </recommendedName>
    <alternativeName>
        <fullName>Immunoglobulin superfamily member 4C</fullName>
        <shortName>IgSF4C</shortName>
    </alternativeName>
    <alternativeName>
        <fullName>Nectin-like protein 4</fullName>
        <shortName>NECL-4</shortName>
    </alternativeName>
    <alternativeName>
        <fullName>TSLC1-like protein 2</fullName>
    </alternativeName>
</protein>